<reference key="1">
    <citation type="journal article" date="1998" name="Biochim. Biophys. Acta">
        <title>Cloning and sequencing of cDNA encoding the LS-12 antifreeze protein in the longhorn sculpin, Myoxocephalus octodecimspinosis.</title>
        <authorList>
            <person name="Zhao Z."/>
            <person name="Deng G."/>
            <person name="Lui Q."/>
            <person name="Laursen R.A."/>
        </authorList>
    </citation>
    <scope>NUCLEOTIDE SEQUENCE [MRNA]</scope>
    <source>
        <tissue>Liver</tissue>
    </source>
</reference>
<reference key="2">
    <citation type="journal article" date="1997" name="FEBS Lett.">
        <title>Amino acid sequence of a new type of antifreeze protein, from the longhorn sculpin Myoxocephalus octodecimspinosis.</title>
        <authorList>
            <person name="Deng G."/>
            <person name="Andrews D.W."/>
            <person name="Laursen R.A."/>
        </authorList>
    </citation>
    <scope>PROTEIN SEQUENCE OF 21-128</scope>
    <scope>PYROGLUTAMATE FORMATION AT GLN-21</scope>
    <source>
        <tissue>Blood</tissue>
    </source>
</reference>
<proteinExistence type="evidence at protein level"/>
<dbReference type="EMBL" id="AF026525">
    <property type="protein sequence ID" value="AAC27986.1"/>
    <property type="molecule type" value="mRNA"/>
</dbReference>
<dbReference type="PIR" id="A59010">
    <property type="entry name" value="A59010"/>
</dbReference>
<dbReference type="SMR" id="P80961"/>
<dbReference type="GO" id="GO:0005576">
    <property type="term" value="C:extracellular region"/>
    <property type="evidence" value="ECO:0007669"/>
    <property type="project" value="UniProtKB-SubCell"/>
</dbReference>
<dbReference type="Gene3D" id="6.10.250.100">
    <property type="match status" value="1"/>
</dbReference>
<dbReference type="SUPFAM" id="SSF58113">
    <property type="entry name" value="Apolipoprotein A-I"/>
    <property type="match status" value="1"/>
</dbReference>
<feature type="signal peptide" evidence="1">
    <location>
        <begin position="1"/>
        <end position="20"/>
    </location>
</feature>
<feature type="chain" id="PRO_0000001698" description="Type-4 ice-structuring protein LS-12">
    <location>
        <begin position="21"/>
        <end position="128"/>
    </location>
</feature>
<feature type="modified residue" description="Pyrrolidone carboxylic acid" evidence="1">
    <location>
        <position position="21"/>
    </location>
</feature>
<comment type="function">
    <text>Antifreeze proteins lower the blood freezing point.</text>
</comment>
<comment type="subcellular location">
    <subcellularLocation>
        <location>Secreted</location>
    </subcellularLocation>
</comment>
<comment type="similarity">
    <text evidence="2">Belongs to the apolipoprotein A1/A4/E family.</text>
</comment>
<accession>P80961</accession>
<accession>O73699</accession>
<evidence type="ECO:0000269" key="1">
    <source>
    </source>
</evidence>
<evidence type="ECO:0000305" key="2"/>
<organism>
    <name type="scientific">Myoxocephalus octodecemspinosus</name>
    <name type="common">Longhorn sculpin</name>
    <name type="synonym">Cottus octodecemspinosus</name>
    <dbReference type="NCBI Taxonomy" id="68557"/>
    <lineage>
        <taxon>Eukaryota</taxon>
        <taxon>Metazoa</taxon>
        <taxon>Chordata</taxon>
        <taxon>Craniata</taxon>
        <taxon>Vertebrata</taxon>
        <taxon>Euteleostomi</taxon>
        <taxon>Actinopterygii</taxon>
        <taxon>Neopterygii</taxon>
        <taxon>Teleostei</taxon>
        <taxon>Neoteleostei</taxon>
        <taxon>Acanthomorphata</taxon>
        <taxon>Eupercaria</taxon>
        <taxon>Perciformes</taxon>
        <taxon>Cottioidei</taxon>
        <taxon>Cottales</taxon>
        <taxon>Cottidae</taxon>
        <taxon>Myoxocephalus</taxon>
    </lineage>
</organism>
<sequence length="128" mass="14378">MKFSLVATIVLLALAQGSFAQGAADLESLGQYFEEMKTKLIQDMTEIIRSQDLANQAQAFVEDKKTQLQPLVAQIQEQMKTVATNVEEQIRPLTANVQAHLQPQIDNFQKQMEAIIKKLTDQTMAIEN</sequence>
<keyword id="KW-0047">Antifreeze protein</keyword>
<keyword id="KW-0903">Direct protein sequencing</keyword>
<keyword id="KW-0873">Pyrrolidone carboxylic acid</keyword>
<keyword id="KW-0964">Secreted</keyword>
<keyword id="KW-0732">Signal</keyword>
<protein>
    <recommendedName>
        <fullName>Type-4 ice-structuring protein LS-12</fullName>
        <shortName>ISP LS-12</shortName>
    </recommendedName>
    <alternativeName>
        <fullName>Antifreeze protein LS-12</fullName>
    </alternativeName>
</protein>
<name>AFP4_MYOOC</name>